<feature type="signal peptide" evidence="2">
    <location>
        <begin position="1"/>
        <end position="22"/>
    </location>
</feature>
<feature type="chain" id="PRO_0000419662" description="Corticosteroid-binding globulin">
    <location>
        <begin position="23"/>
        <end position="404"/>
    </location>
</feature>
<feature type="binding site" evidence="1">
    <location>
        <position position="253"/>
    </location>
    <ligand>
        <name>cortisol</name>
        <dbReference type="ChEBI" id="CHEBI:17650"/>
    </ligand>
</feature>
<feature type="binding site" evidence="1">
    <location>
        <position position="285"/>
    </location>
    <ligand>
        <name>cortisol</name>
        <dbReference type="ChEBI" id="CHEBI:17650"/>
    </ligand>
</feature>
<feature type="binding site" evidence="1">
    <location>
        <position position="392"/>
    </location>
    <ligand>
        <name>cortisol</name>
        <dbReference type="ChEBI" id="CHEBI:17650"/>
    </ligand>
</feature>
<feature type="site" description="Conserved cysteine within steroid binding domain">
    <location>
        <position position="249"/>
    </location>
</feature>
<feature type="glycosylation site" description="N-linked (GlcNAc...) asparagine" evidence="2">
    <location>
        <position position="95"/>
    </location>
</feature>
<feature type="glycosylation site" description="N-linked (GlcNAc...) asparagine" evidence="2">
    <location>
        <position position="119"/>
    </location>
</feature>
<feature type="glycosylation site" description="N-linked (GlcNAc...) asparagine" evidence="2">
    <location>
        <position position="175"/>
    </location>
</feature>
<feature type="glycosylation site" description="N-linked (GlcNAc...) asparagine" evidence="1">
    <location>
        <position position="259"/>
    </location>
</feature>
<feature type="glycosylation site" description="N-linked (GlcNAc...) asparagine" evidence="2">
    <location>
        <position position="326"/>
    </location>
</feature>
<gene>
    <name type="primary">SERPINA6</name>
    <name type="synonym">CBG</name>
</gene>
<organism>
    <name type="scientific">Bos taurus</name>
    <name type="common">Bovine</name>
    <dbReference type="NCBI Taxonomy" id="9913"/>
    <lineage>
        <taxon>Eukaryota</taxon>
        <taxon>Metazoa</taxon>
        <taxon>Chordata</taxon>
        <taxon>Craniata</taxon>
        <taxon>Vertebrata</taxon>
        <taxon>Euteleostomi</taxon>
        <taxon>Mammalia</taxon>
        <taxon>Eutheria</taxon>
        <taxon>Laurasiatheria</taxon>
        <taxon>Artiodactyla</taxon>
        <taxon>Ruminantia</taxon>
        <taxon>Pecora</taxon>
        <taxon>Bovidae</taxon>
        <taxon>Bovinae</taxon>
        <taxon>Bos</taxon>
    </lineage>
</organism>
<name>CBG_BOVIN</name>
<protein>
    <recommendedName>
        <fullName>Corticosteroid-binding globulin</fullName>
        <shortName>CBG</shortName>
    </recommendedName>
    <alternativeName>
        <fullName>Serpin A6</fullName>
    </alternativeName>
    <alternativeName>
        <fullName>Transcortin</fullName>
    </alternativeName>
</protein>
<comment type="function">
    <text>Major transport protein for glucocorticoids and progestins in the blood of almost all vertebrate species.</text>
</comment>
<comment type="subcellular location">
    <subcellularLocation>
        <location evidence="1">Secreted</location>
    </subcellularLocation>
</comment>
<comment type="domain">
    <text evidence="1">Proteolytic cleavage leads to an important conformation change. This reduces the affinity for steroids (By similarity).</text>
</comment>
<comment type="PTM">
    <text evidence="1">Glycosylation in position Asn-259 is needed for steroid binding.</text>
</comment>
<comment type="similarity">
    <text evidence="3">Belongs to the serpin family.</text>
</comment>
<sequence>MLPTLYTCLLWLSTSGLWTVQAKGSDTDMSTRNPHRDLAPNNVDFAFTLYKHLVASAPGKNVFISPVSISTALAMLSLGARGYTREQLLQGLGFNLTEMSEGEIHRAFRHLHHLLRESNTTLDMTMGNALFLDHSLELLESFSADTKHYYELEALTTDFQDWAGASRQINEYIKNKTQGNIVDLFSESDSSATLILVNYIFFKGMWAHSFDLESTREENFHVNEATTVQVPMMFQSNTIKYLNDSVLPCQLVQLDYTGNETVFFVLPVKGKMDSVITALSRDTIQRWSKSLTMSQVDLYIPKISISGAYDLGGIMGDMGIADLLSNRTHFSGITQEALPKVSKVVHKAALQVDEKGLEADAPTRVSLSAAPGPLTLRFNRPFIIMIFDDFTWSSLFLGKVVNPT</sequence>
<evidence type="ECO:0000250" key="1"/>
<evidence type="ECO:0000255" key="2"/>
<evidence type="ECO:0000305" key="3"/>
<proteinExistence type="inferred from homology"/>
<dbReference type="EMBL" id="DAAA02053054">
    <property type="status" value="NOT_ANNOTATED_CDS"/>
    <property type="molecule type" value="Genomic_DNA"/>
</dbReference>
<dbReference type="RefSeq" id="XP_010815611.1">
    <property type="nucleotide sequence ID" value="XM_010817309.3"/>
</dbReference>
<dbReference type="RefSeq" id="XP_010823257.1">
    <property type="nucleotide sequence ID" value="XM_010824955.1"/>
</dbReference>
<dbReference type="SMR" id="E1BF81"/>
<dbReference type="FunCoup" id="E1BF81">
    <property type="interactions" value="157"/>
</dbReference>
<dbReference type="STRING" id="9913.ENSBTAP00000023402"/>
<dbReference type="GlyCosmos" id="E1BF81">
    <property type="glycosylation" value="5 sites, No reported glycans"/>
</dbReference>
<dbReference type="GlyGen" id="E1BF81">
    <property type="glycosylation" value="5 sites"/>
</dbReference>
<dbReference type="PaxDb" id="9913-ENSBTAP00000023402"/>
<dbReference type="Ensembl" id="ENSBTAT00000023402.7">
    <property type="protein sequence ID" value="ENSBTAP00000023402.5"/>
    <property type="gene ID" value="ENSBTAG00000039808.4"/>
</dbReference>
<dbReference type="GeneID" id="513746"/>
<dbReference type="KEGG" id="bta:513746"/>
<dbReference type="CTD" id="866"/>
<dbReference type="VEuPathDB" id="HostDB:ENSBTAG00000039808"/>
<dbReference type="VGNC" id="VGNC:34468">
    <property type="gene designation" value="SERPINA6"/>
</dbReference>
<dbReference type="eggNOG" id="KOG2392">
    <property type="taxonomic scope" value="Eukaryota"/>
</dbReference>
<dbReference type="GeneTree" id="ENSGT00940000161611"/>
<dbReference type="HOGENOM" id="CLU_023330_2_1_1"/>
<dbReference type="InParanoid" id="E1BF81"/>
<dbReference type="OMA" id="HDSELPC"/>
<dbReference type="OrthoDB" id="671595at2759"/>
<dbReference type="TreeFam" id="TF343201"/>
<dbReference type="Reactome" id="R-BTA-194002">
    <property type="pathway name" value="Glucocorticoid biosynthesis"/>
</dbReference>
<dbReference type="Reactome" id="R-BTA-9757110">
    <property type="pathway name" value="Prednisone ADME"/>
</dbReference>
<dbReference type="Proteomes" id="UP000009136">
    <property type="component" value="Chromosome 21"/>
</dbReference>
<dbReference type="Bgee" id="ENSBTAG00000039808">
    <property type="expression patterns" value="Expressed in liver and 11 other cell types or tissues"/>
</dbReference>
<dbReference type="GO" id="GO:0005615">
    <property type="term" value="C:extracellular space"/>
    <property type="evidence" value="ECO:0000318"/>
    <property type="project" value="GO_Central"/>
</dbReference>
<dbReference type="GO" id="GO:0004867">
    <property type="term" value="F:serine-type endopeptidase inhibitor activity"/>
    <property type="evidence" value="ECO:0000318"/>
    <property type="project" value="GO_Central"/>
</dbReference>
<dbReference type="GO" id="GO:0005496">
    <property type="term" value="F:steroid binding"/>
    <property type="evidence" value="ECO:0000250"/>
    <property type="project" value="UniProtKB"/>
</dbReference>
<dbReference type="GO" id="GO:0008211">
    <property type="term" value="P:glucocorticoid metabolic process"/>
    <property type="evidence" value="ECO:0007669"/>
    <property type="project" value="Ensembl"/>
</dbReference>
<dbReference type="CDD" id="cd19554">
    <property type="entry name" value="serpinA6_CBG"/>
    <property type="match status" value="1"/>
</dbReference>
<dbReference type="FunFam" id="3.30.497.10:FF:000001">
    <property type="entry name" value="Serine protease inhibitor"/>
    <property type="match status" value="1"/>
</dbReference>
<dbReference type="FunFam" id="2.30.39.10:FF:000002">
    <property type="entry name" value="Serpin family D member 1"/>
    <property type="match status" value="1"/>
</dbReference>
<dbReference type="Gene3D" id="2.30.39.10">
    <property type="entry name" value="Alpha-1-antitrypsin, domain 1"/>
    <property type="match status" value="1"/>
</dbReference>
<dbReference type="Gene3D" id="3.30.497.10">
    <property type="entry name" value="Antithrombin, subunit I, domain 2"/>
    <property type="match status" value="1"/>
</dbReference>
<dbReference type="InterPro" id="IPR023795">
    <property type="entry name" value="Serpin_CS"/>
</dbReference>
<dbReference type="InterPro" id="IPR023796">
    <property type="entry name" value="Serpin_dom"/>
</dbReference>
<dbReference type="InterPro" id="IPR000215">
    <property type="entry name" value="Serpin_fam"/>
</dbReference>
<dbReference type="InterPro" id="IPR036186">
    <property type="entry name" value="Serpin_sf"/>
</dbReference>
<dbReference type="InterPro" id="IPR042178">
    <property type="entry name" value="Serpin_sf_1"/>
</dbReference>
<dbReference type="InterPro" id="IPR042185">
    <property type="entry name" value="Serpin_sf_2"/>
</dbReference>
<dbReference type="PANTHER" id="PTHR11461:SF34">
    <property type="entry name" value="CORTICOSTEROID-BINDING GLOBULIN"/>
    <property type="match status" value="1"/>
</dbReference>
<dbReference type="PANTHER" id="PTHR11461">
    <property type="entry name" value="SERINE PROTEASE INHIBITOR, SERPIN"/>
    <property type="match status" value="1"/>
</dbReference>
<dbReference type="Pfam" id="PF00079">
    <property type="entry name" value="Serpin"/>
    <property type="match status" value="1"/>
</dbReference>
<dbReference type="SMART" id="SM00093">
    <property type="entry name" value="SERPIN"/>
    <property type="match status" value="1"/>
</dbReference>
<dbReference type="SUPFAM" id="SSF56574">
    <property type="entry name" value="Serpins"/>
    <property type="match status" value="1"/>
</dbReference>
<dbReference type="PROSITE" id="PS00284">
    <property type="entry name" value="SERPIN"/>
    <property type="match status" value="1"/>
</dbReference>
<reference key="1">
    <citation type="journal article" date="2009" name="Genome Biol.">
        <title>A whole-genome assembly of the domestic cow, Bos taurus.</title>
        <authorList>
            <person name="Zimin A.V."/>
            <person name="Delcher A.L."/>
            <person name="Florea L."/>
            <person name="Kelley D.R."/>
            <person name="Schatz M.C."/>
            <person name="Puiu D."/>
            <person name="Hanrahan F."/>
            <person name="Pertea G."/>
            <person name="Van Tassell C.P."/>
            <person name="Sonstegard T.S."/>
            <person name="Marcais G."/>
            <person name="Roberts M."/>
            <person name="Subramanian P."/>
            <person name="Yorke J.A."/>
            <person name="Salzberg S.L."/>
        </authorList>
    </citation>
    <scope>NUCLEOTIDE SEQUENCE [LARGE SCALE GENOMIC DNA]</scope>
    <source>
        <strain>Hereford</strain>
    </source>
</reference>
<keyword id="KW-0325">Glycoprotein</keyword>
<keyword id="KW-0446">Lipid-binding</keyword>
<keyword id="KW-1185">Reference proteome</keyword>
<keyword id="KW-0964">Secreted</keyword>
<keyword id="KW-0732">Signal</keyword>
<keyword id="KW-0754">Steroid-binding</keyword>
<keyword id="KW-0813">Transport</keyword>
<accession>E1BF81</accession>